<gene>
    <name evidence="1" type="primary">rpoZ</name>
    <name type="ordered locus">CYA_0155</name>
</gene>
<protein>
    <recommendedName>
        <fullName evidence="1">DNA-directed RNA polymerase subunit omega</fullName>
        <shortName evidence="1">RNAP omega subunit</shortName>
        <ecNumber evidence="1">2.7.7.6</ecNumber>
    </recommendedName>
    <alternativeName>
        <fullName evidence="1">RNA polymerase omega subunit</fullName>
    </alternativeName>
    <alternativeName>
        <fullName evidence="1">Transcriptase subunit omega</fullName>
    </alternativeName>
</protein>
<evidence type="ECO:0000255" key="1">
    <source>
        <dbReference type="HAMAP-Rule" id="MF_00366"/>
    </source>
</evidence>
<reference key="1">
    <citation type="journal article" date="2007" name="ISME J.">
        <title>Population level functional diversity in a microbial community revealed by comparative genomic and metagenomic analyses.</title>
        <authorList>
            <person name="Bhaya D."/>
            <person name="Grossman A.R."/>
            <person name="Steunou A.-S."/>
            <person name="Khuri N."/>
            <person name="Cohan F.M."/>
            <person name="Hamamura N."/>
            <person name="Melendrez M.C."/>
            <person name="Bateson M.M."/>
            <person name="Ward D.M."/>
            <person name="Heidelberg J.F."/>
        </authorList>
    </citation>
    <scope>NUCLEOTIDE SEQUENCE [LARGE SCALE GENOMIC DNA]</scope>
    <source>
        <strain>JA-3-3Ab</strain>
    </source>
</reference>
<sequence>MTLRNPHLGIDNDELMRRVEALINASKNRYRITVQVANRAKRRRYDDPNDVEEGWMKPIRRAIIEMSDELTEPEIIGDE</sequence>
<feature type="chain" id="PRO_0000237519" description="DNA-directed RNA polymerase subunit omega">
    <location>
        <begin position="1"/>
        <end position="79"/>
    </location>
</feature>
<organism>
    <name type="scientific">Synechococcus sp. (strain JA-3-3Ab)</name>
    <name type="common">Cyanobacteria bacterium Yellowstone A-Prime</name>
    <dbReference type="NCBI Taxonomy" id="321327"/>
    <lineage>
        <taxon>Bacteria</taxon>
        <taxon>Bacillati</taxon>
        <taxon>Cyanobacteriota</taxon>
        <taxon>Cyanophyceae</taxon>
        <taxon>Synechococcales</taxon>
        <taxon>Synechococcaceae</taxon>
        <taxon>Synechococcus</taxon>
    </lineage>
</organism>
<dbReference type="EC" id="2.7.7.6" evidence="1"/>
<dbReference type="EMBL" id="CP000239">
    <property type="protein sequence ID" value="ABC98384.1"/>
    <property type="molecule type" value="Genomic_DNA"/>
</dbReference>
<dbReference type="RefSeq" id="WP_011429075.1">
    <property type="nucleotide sequence ID" value="NC_007775.1"/>
</dbReference>
<dbReference type="SMR" id="Q2JXT8"/>
<dbReference type="STRING" id="321327.CYA_0155"/>
<dbReference type="KEGG" id="cya:CYA_0155"/>
<dbReference type="eggNOG" id="ENOG5032RMS">
    <property type="taxonomic scope" value="Bacteria"/>
</dbReference>
<dbReference type="HOGENOM" id="CLU_175526_0_0_3"/>
<dbReference type="OrthoDB" id="463386at2"/>
<dbReference type="Proteomes" id="UP000008818">
    <property type="component" value="Chromosome"/>
</dbReference>
<dbReference type="GO" id="GO:0000428">
    <property type="term" value="C:DNA-directed RNA polymerase complex"/>
    <property type="evidence" value="ECO:0007669"/>
    <property type="project" value="UniProtKB-KW"/>
</dbReference>
<dbReference type="GO" id="GO:0003677">
    <property type="term" value="F:DNA binding"/>
    <property type="evidence" value="ECO:0007669"/>
    <property type="project" value="UniProtKB-UniRule"/>
</dbReference>
<dbReference type="GO" id="GO:0003899">
    <property type="term" value="F:DNA-directed RNA polymerase activity"/>
    <property type="evidence" value="ECO:0007669"/>
    <property type="project" value="UniProtKB-UniRule"/>
</dbReference>
<dbReference type="GO" id="GO:0006351">
    <property type="term" value="P:DNA-templated transcription"/>
    <property type="evidence" value="ECO:0007669"/>
    <property type="project" value="UniProtKB-UniRule"/>
</dbReference>
<dbReference type="HAMAP" id="MF_00366">
    <property type="entry name" value="RNApol_bact_RpoZ"/>
    <property type="match status" value="1"/>
</dbReference>
<dbReference type="InterPro" id="IPR003716">
    <property type="entry name" value="DNA-dir_RNA_pol_omega"/>
</dbReference>
<dbReference type="InterPro" id="IPR006110">
    <property type="entry name" value="Pol_omega/Rpo6/RPB6"/>
</dbReference>
<dbReference type="InterPro" id="IPR036161">
    <property type="entry name" value="RPB6/omega-like_sf"/>
</dbReference>
<dbReference type="NCBIfam" id="NF001574">
    <property type="entry name" value="PRK00392.2-5"/>
    <property type="match status" value="1"/>
</dbReference>
<dbReference type="Pfam" id="PF01192">
    <property type="entry name" value="RNA_pol_Rpb6"/>
    <property type="match status" value="1"/>
</dbReference>
<dbReference type="SUPFAM" id="SSF63562">
    <property type="entry name" value="RPB6/omega subunit-like"/>
    <property type="match status" value="1"/>
</dbReference>
<name>RPOZ_SYNJA</name>
<proteinExistence type="inferred from homology"/>
<comment type="function">
    <text evidence="1">Promotes RNA polymerase assembly. Latches the N- and C-terminal regions of the beta' subunit thereby facilitating its interaction with the beta and alpha subunits.</text>
</comment>
<comment type="catalytic activity">
    <reaction evidence="1">
        <text>RNA(n) + a ribonucleoside 5'-triphosphate = RNA(n+1) + diphosphate</text>
        <dbReference type="Rhea" id="RHEA:21248"/>
        <dbReference type="Rhea" id="RHEA-COMP:14527"/>
        <dbReference type="Rhea" id="RHEA-COMP:17342"/>
        <dbReference type="ChEBI" id="CHEBI:33019"/>
        <dbReference type="ChEBI" id="CHEBI:61557"/>
        <dbReference type="ChEBI" id="CHEBI:140395"/>
        <dbReference type="EC" id="2.7.7.6"/>
    </reaction>
</comment>
<comment type="subunit">
    <text evidence="1">In cyanobacteria the RNAP catalytic core is composed of 2 alpha, 1 beta, 1 beta', 1 gamma and 1 omega subunit. When a sigma factor is associated with the core the holoenzyme is formed, which can initiate transcription.</text>
</comment>
<comment type="similarity">
    <text evidence="1">Belongs to the RNA polymerase subunit omega family.</text>
</comment>
<keyword id="KW-0240">DNA-directed RNA polymerase</keyword>
<keyword id="KW-0548">Nucleotidyltransferase</keyword>
<keyword id="KW-0804">Transcription</keyword>
<keyword id="KW-0808">Transferase</keyword>
<accession>Q2JXT8</accession>